<feature type="chain" id="PRO_0000060607" description="Cytochrome b">
    <location>
        <begin position="1"/>
        <end position="381"/>
    </location>
</feature>
<feature type="transmembrane region" description="Helical" evidence="2">
    <location>
        <begin position="33"/>
        <end position="53"/>
    </location>
</feature>
<feature type="transmembrane region" description="Helical" evidence="2">
    <location>
        <begin position="77"/>
        <end position="98"/>
    </location>
</feature>
<feature type="transmembrane region" description="Helical" evidence="2">
    <location>
        <begin position="113"/>
        <end position="133"/>
    </location>
</feature>
<feature type="transmembrane region" description="Helical" evidence="2">
    <location>
        <begin position="178"/>
        <end position="198"/>
    </location>
</feature>
<feature type="transmembrane region" description="Helical" evidence="2">
    <location>
        <begin position="226"/>
        <end position="246"/>
    </location>
</feature>
<feature type="transmembrane region" description="Helical" evidence="2">
    <location>
        <begin position="288"/>
        <end position="308"/>
    </location>
</feature>
<feature type="transmembrane region" description="Helical" evidence="2">
    <location>
        <begin position="320"/>
        <end position="340"/>
    </location>
</feature>
<feature type="transmembrane region" description="Helical" evidence="2">
    <location>
        <begin position="347"/>
        <end position="367"/>
    </location>
</feature>
<feature type="binding site" description="axial binding residue" evidence="2">
    <location>
        <position position="83"/>
    </location>
    <ligand>
        <name>heme b</name>
        <dbReference type="ChEBI" id="CHEBI:60344"/>
        <label>b562</label>
    </ligand>
    <ligandPart>
        <name>Fe</name>
        <dbReference type="ChEBI" id="CHEBI:18248"/>
    </ligandPart>
</feature>
<feature type="binding site" description="axial binding residue" evidence="2">
    <location>
        <position position="97"/>
    </location>
    <ligand>
        <name>heme b</name>
        <dbReference type="ChEBI" id="CHEBI:60344"/>
        <label>b566</label>
    </ligand>
    <ligandPart>
        <name>Fe</name>
        <dbReference type="ChEBI" id="CHEBI:18248"/>
    </ligandPart>
</feature>
<feature type="binding site" description="axial binding residue" evidence="2">
    <location>
        <position position="182"/>
    </location>
    <ligand>
        <name>heme b</name>
        <dbReference type="ChEBI" id="CHEBI:60344"/>
        <label>b562</label>
    </ligand>
    <ligandPart>
        <name>Fe</name>
        <dbReference type="ChEBI" id="CHEBI:18248"/>
    </ligandPart>
</feature>
<feature type="binding site" description="axial binding residue" evidence="2">
    <location>
        <position position="196"/>
    </location>
    <ligand>
        <name>heme b</name>
        <dbReference type="ChEBI" id="CHEBI:60344"/>
        <label>b566</label>
    </ligand>
    <ligandPart>
        <name>Fe</name>
        <dbReference type="ChEBI" id="CHEBI:18248"/>
    </ligandPart>
</feature>
<feature type="binding site" evidence="2">
    <location>
        <position position="201"/>
    </location>
    <ligand>
        <name>a ubiquinone</name>
        <dbReference type="ChEBI" id="CHEBI:16389"/>
    </ligand>
</feature>
<proteinExistence type="inferred from homology"/>
<organism>
    <name type="scientific">Apodemus alpicola</name>
    <name type="common">Alpine field mouse</name>
    <dbReference type="NCBI Taxonomy" id="100381"/>
    <lineage>
        <taxon>Eukaryota</taxon>
        <taxon>Metazoa</taxon>
        <taxon>Chordata</taxon>
        <taxon>Craniata</taxon>
        <taxon>Vertebrata</taxon>
        <taxon>Euteleostomi</taxon>
        <taxon>Mammalia</taxon>
        <taxon>Eutheria</taxon>
        <taxon>Euarchontoglires</taxon>
        <taxon>Glires</taxon>
        <taxon>Rodentia</taxon>
        <taxon>Myomorpha</taxon>
        <taxon>Muroidea</taxon>
        <taxon>Muridae</taxon>
        <taxon>Murinae</taxon>
        <taxon>Apodemus</taxon>
        <taxon>Sylvaemus group</taxon>
    </lineage>
</organism>
<comment type="function">
    <text evidence="2">Component of the ubiquinol-cytochrome c reductase complex (complex III or cytochrome b-c1 complex) that is part of the mitochondrial respiratory chain. The b-c1 complex mediates electron transfer from ubiquinol to cytochrome c. Contributes to the generation of a proton gradient across the mitochondrial membrane that is then used for ATP synthesis.</text>
</comment>
<comment type="cofactor">
    <cofactor evidence="2">
        <name>heme b</name>
        <dbReference type="ChEBI" id="CHEBI:60344"/>
    </cofactor>
    <text evidence="2">Binds 2 heme b groups non-covalently.</text>
</comment>
<comment type="subunit">
    <text evidence="2">The cytochrome bc1 complex contains 11 subunits: 3 respiratory subunits (MT-CYB, CYC1 and UQCRFS1), 2 core proteins (UQCRC1 and UQCRC2) and 6 low-molecular weight proteins (UQCRH/QCR6, UQCRB/QCR7, UQCRQ/QCR8, UQCR10/QCR9, UQCR11/QCR10 and a cleavage product of UQCRFS1). This cytochrome bc1 complex then forms a dimer.</text>
</comment>
<comment type="subcellular location">
    <subcellularLocation>
        <location evidence="2">Mitochondrion inner membrane</location>
        <topology evidence="2">Multi-pass membrane protein</topology>
    </subcellularLocation>
</comment>
<comment type="miscellaneous">
    <text evidence="1">Heme 1 (or BL or b562) is low-potential and absorbs at about 562 nm, and heme 2 (or BH or b566) is high-potential and absorbs at about 566 nm.</text>
</comment>
<comment type="similarity">
    <text evidence="3 4">Belongs to the cytochrome b family.</text>
</comment>
<comment type="caution">
    <text evidence="2">The full-length protein contains only eight transmembrane helices, not nine as predicted by bioinformatics tools.</text>
</comment>
<reference key="1">
    <citation type="journal article" date="2000" name="Mol. Phylogenet. Evol.">
        <title>Molecular phylogeny of European muroid rodents based on complete cytochrome b sequences.</title>
        <authorList>
            <person name="Martin Y."/>
            <person name="Gerlach G."/>
            <person name="Schlotterer C."/>
            <person name="Meyer A."/>
        </authorList>
    </citation>
    <scope>NUCLEOTIDE SEQUENCE [GENOMIC DNA]</scope>
</reference>
<accession>Q9TEY8</accession>
<keyword id="KW-0249">Electron transport</keyword>
<keyword id="KW-0349">Heme</keyword>
<keyword id="KW-0408">Iron</keyword>
<keyword id="KW-0472">Membrane</keyword>
<keyword id="KW-0479">Metal-binding</keyword>
<keyword id="KW-0496">Mitochondrion</keyword>
<keyword id="KW-0999">Mitochondrion inner membrane</keyword>
<keyword id="KW-0679">Respiratory chain</keyword>
<keyword id="KW-0812">Transmembrane</keyword>
<keyword id="KW-1133">Transmembrane helix</keyword>
<keyword id="KW-0813">Transport</keyword>
<keyword id="KW-0830">Ubiquinone</keyword>
<evidence type="ECO:0000250" key="1"/>
<evidence type="ECO:0000250" key="2">
    <source>
        <dbReference type="UniProtKB" id="P00157"/>
    </source>
</evidence>
<evidence type="ECO:0000255" key="3">
    <source>
        <dbReference type="PROSITE-ProRule" id="PRU00967"/>
    </source>
</evidence>
<evidence type="ECO:0000255" key="4">
    <source>
        <dbReference type="PROSITE-ProRule" id="PRU00968"/>
    </source>
</evidence>
<gene>
    <name type="primary">MT-CYB</name>
    <name type="synonym">COB</name>
    <name type="synonym">CYTB</name>
    <name type="synonym">MTCYB</name>
</gene>
<geneLocation type="mitochondrion"/>
<name>CYB_APOAL</name>
<dbReference type="EMBL" id="AF159391">
    <property type="protein sequence ID" value="AAD49236.1"/>
    <property type="molecule type" value="Genomic_DNA"/>
</dbReference>
<dbReference type="SMR" id="Q9TEY8"/>
<dbReference type="GO" id="GO:0005743">
    <property type="term" value="C:mitochondrial inner membrane"/>
    <property type="evidence" value="ECO:0007669"/>
    <property type="project" value="UniProtKB-SubCell"/>
</dbReference>
<dbReference type="GO" id="GO:0045275">
    <property type="term" value="C:respiratory chain complex III"/>
    <property type="evidence" value="ECO:0007669"/>
    <property type="project" value="InterPro"/>
</dbReference>
<dbReference type="GO" id="GO:0046872">
    <property type="term" value="F:metal ion binding"/>
    <property type="evidence" value="ECO:0007669"/>
    <property type="project" value="UniProtKB-KW"/>
</dbReference>
<dbReference type="GO" id="GO:0008121">
    <property type="term" value="F:ubiquinol-cytochrome-c reductase activity"/>
    <property type="evidence" value="ECO:0007669"/>
    <property type="project" value="InterPro"/>
</dbReference>
<dbReference type="GO" id="GO:0006122">
    <property type="term" value="P:mitochondrial electron transport, ubiquinol to cytochrome c"/>
    <property type="evidence" value="ECO:0007669"/>
    <property type="project" value="TreeGrafter"/>
</dbReference>
<dbReference type="CDD" id="cd00290">
    <property type="entry name" value="cytochrome_b_C"/>
    <property type="match status" value="1"/>
</dbReference>
<dbReference type="CDD" id="cd00284">
    <property type="entry name" value="Cytochrome_b_N"/>
    <property type="match status" value="1"/>
</dbReference>
<dbReference type="FunFam" id="1.20.810.10:FF:000002">
    <property type="entry name" value="Cytochrome b"/>
    <property type="match status" value="1"/>
</dbReference>
<dbReference type="Gene3D" id="1.20.810.10">
    <property type="entry name" value="Cytochrome Bc1 Complex, Chain C"/>
    <property type="match status" value="1"/>
</dbReference>
<dbReference type="InterPro" id="IPR005798">
    <property type="entry name" value="Cyt_b/b6_C"/>
</dbReference>
<dbReference type="InterPro" id="IPR036150">
    <property type="entry name" value="Cyt_b/b6_C_sf"/>
</dbReference>
<dbReference type="InterPro" id="IPR005797">
    <property type="entry name" value="Cyt_b/b6_N"/>
</dbReference>
<dbReference type="InterPro" id="IPR027387">
    <property type="entry name" value="Cytb/b6-like_sf"/>
</dbReference>
<dbReference type="InterPro" id="IPR030689">
    <property type="entry name" value="Cytochrome_b"/>
</dbReference>
<dbReference type="InterPro" id="IPR048260">
    <property type="entry name" value="Cytochrome_b_C_euk/bac"/>
</dbReference>
<dbReference type="InterPro" id="IPR048259">
    <property type="entry name" value="Cytochrome_b_N_euk/bac"/>
</dbReference>
<dbReference type="InterPro" id="IPR016174">
    <property type="entry name" value="Di-haem_cyt_TM"/>
</dbReference>
<dbReference type="PANTHER" id="PTHR19271">
    <property type="entry name" value="CYTOCHROME B"/>
    <property type="match status" value="1"/>
</dbReference>
<dbReference type="PANTHER" id="PTHR19271:SF16">
    <property type="entry name" value="CYTOCHROME B"/>
    <property type="match status" value="1"/>
</dbReference>
<dbReference type="Pfam" id="PF00032">
    <property type="entry name" value="Cytochrom_B_C"/>
    <property type="match status" value="1"/>
</dbReference>
<dbReference type="Pfam" id="PF00033">
    <property type="entry name" value="Cytochrome_B"/>
    <property type="match status" value="1"/>
</dbReference>
<dbReference type="PIRSF" id="PIRSF038885">
    <property type="entry name" value="COB"/>
    <property type="match status" value="1"/>
</dbReference>
<dbReference type="SUPFAM" id="SSF81648">
    <property type="entry name" value="a domain/subunit of cytochrome bc1 complex (Ubiquinol-cytochrome c reductase)"/>
    <property type="match status" value="1"/>
</dbReference>
<dbReference type="SUPFAM" id="SSF81342">
    <property type="entry name" value="Transmembrane di-heme cytochromes"/>
    <property type="match status" value="1"/>
</dbReference>
<dbReference type="PROSITE" id="PS51003">
    <property type="entry name" value="CYTB_CTER"/>
    <property type="match status" value="1"/>
</dbReference>
<dbReference type="PROSITE" id="PS51002">
    <property type="entry name" value="CYTB_NTER"/>
    <property type="match status" value="1"/>
</dbReference>
<sequence>MTNIRKTHPLLKIINHSFIDLPAPSNISSWWNFGSLLGICLMIQILTGLFLAMHYTSDTMTAFSSVTHICRDVNYGWLIRYMHANGASMFFICLFLHVGRGMYYGSYTFMETWNIGVILLFAVMATAFMGYVLPWGQMSFWGATVITNLLSAIPYIGTTLVEWIWGGFSVDKATLTRFFAFHFILPFIITALVIVHLLFLHETGSNNPTGLNSDADKIPFHPYYTIKDILGVLMMISFLMTLVLFFPDLLGDPDNYMPANPLNTPPHIKPEWYFLFAYAILRSIPNKLGGVLALILSILILALLPFLHTSKQRSLMFRPITQILYWILVANLLVLTWIGGQPVEHPFIIIGQLASISYFSIILILMPISGIIEDKMLKWNL</sequence>
<protein>
    <recommendedName>
        <fullName>Cytochrome b</fullName>
    </recommendedName>
    <alternativeName>
        <fullName>Complex III subunit 3</fullName>
    </alternativeName>
    <alternativeName>
        <fullName>Complex III subunit III</fullName>
    </alternativeName>
    <alternativeName>
        <fullName>Cytochrome b-c1 complex subunit 3</fullName>
    </alternativeName>
    <alternativeName>
        <fullName>Ubiquinol-cytochrome-c reductase complex cytochrome b subunit</fullName>
    </alternativeName>
</protein>